<comment type="function">
    <text evidence="1">Catalyzes the stereoinversion of LL-2,6-diaminopimelate (L,L-DAP) to meso-diaminopimelate (meso-DAP), a precursor of L-lysine and an essential component of the bacterial peptidoglycan.</text>
</comment>
<comment type="catalytic activity">
    <reaction evidence="1">
        <text>(2S,6S)-2,6-diaminopimelate = meso-2,6-diaminopimelate</text>
        <dbReference type="Rhea" id="RHEA:15393"/>
        <dbReference type="ChEBI" id="CHEBI:57609"/>
        <dbReference type="ChEBI" id="CHEBI:57791"/>
        <dbReference type="EC" id="5.1.1.7"/>
    </reaction>
</comment>
<comment type="pathway">
    <text evidence="1">Amino-acid biosynthesis; L-lysine biosynthesis via DAP pathway; DL-2,6-diaminopimelate from LL-2,6-diaminopimelate: step 1/1.</text>
</comment>
<comment type="subunit">
    <text evidence="1">Homodimer.</text>
</comment>
<comment type="subcellular location">
    <subcellularLocation>
        <location evidence="1">Cytoplasm</location>
    </subcellularLocation>
</comment>
<comment type="similarity">
    <text evidence="1">Belongs to the diaminopimelate epimerase family.</text>
</comment>
<gene>
    <name evidence="1" type="primary">dapF</name>
    <name type="ordered locus">SeAg_B4175</name>
</gene>
<proteinExistence type="inferred from homology"/>
<keyword id="KW-0028">Amino-acid biosynthesis</keyword>
<keyword id="KW-0963">Cytoplasm</keyword>
<keyword id="KW-0413">Isomerase</keyword>
<keyword id="KW-0457">Lysine biosynthesis</keyword>
<protein>
    <recommendedName>
        <fullName evidence="1">Diaminopimelate epimerase</fullName>
        <shortName evidence="1">DAP epimerase</shortName>
        <ecNumber evidence="1">5.1.1.7</ecNumber>
    </recommendedName>
    <alternativeName>
        <fullName evidence="1">PLP-independent amino acid racemase</fullName>
    </alternativeName>
</protein>
<sequence>MQFSKMHGLGNDFMVVDAVTQNVFFSPELIRRLSDRHLGVGFDQLLVVEPPYDPELDFHYRIFNADGSEVSQCGNGARCFARFVRLKGLTNKRDIRVSTANGRMVLSVTEDELVRVNMGEPNFEPAQVPFRANKAEKTYIMRAAEQTILCGVVSMGNPHCVIQVDNVDTAAVETLGPVLESHERFPERANIGFMQVVRREHIRLRVYERGAGETRACGSGACAAVAVGIQQGLLAEEVRVELPGGRLDIAWKGPGHPLYMTGPAAHIYDGFIHL</sequence>
<dbReference type="EC" id="5.1.1.7" evidence="1"/>
<dbReference type="EMBL" id="CP001138">
    <property type="protein sequence ID" value="ACH51080.1"/>
    <property type="molecule type" value="Genomic_DNA"/>
</dbReference>
<dbReference type="RefSeq" id="WP_001160671.1">
    <property type="nucleotide sequence ID" value="NC_011149.1"/>
</dbReference>
<dbReference type="SMR" id="B5EZS3"/>
<dbReference type="KEGG" id="sea:SeAg_B4175"/>
<dbReference type="HOGENOM" id="CLU_053306_1_1_6"/>
<dbReference type="UniPathway" id="UPA00034">
    <property type="reaction ID" value="UER00025"/>
</dbReference>
<dbReference type="Proteomes" id="UP000008819">
    <property type="component" value="Chromosome"/>
</dbReference>
<dbReference type="GO" id="GO:0005829">
    <property type="term" value="C:cytosol"/>
    <property type="evidence" value="ECO:0007669"/>
    <property type="project" value="TreeGrafter"/>
</dbReference>
<dbReference type="GO" id="GO:0008837">
    <property type="term" value="F:diaminopimelate epimerase activity"/>
    <property type="evidence" value="ECO:0007669"/>
    <property type="project" value="UniProtKB-UniRule"/>
</dbReference>
<dbReference type="GO" id="GO:0009089">
    <property type="term" value="P:lysine biosynthetic process via diaminopimelate"/>
    <property type="evidence" value="ECO:0007669"/>
    <property type="project" value="UniProtKB-UniRule"/>
</dbReference>
<dbReference type="FunFam" id="3.10.310.10:FF:000001">
    <property type="entry name" value="Diaminopimelate epimerase"/>
    <property type="match status" value="1"/>
</dbReference>
<dbReference type="FunFam" id="3.10.310.10:FF:000002">
    <property type="entry name" value="Diaminopimelate epimerase"/>
    <property type="match status" value="1"/>
</dbReference>
<dbReference type="Gene3D" id="3.10.310.10">
    <property type="entry name" value="Diaminopimelate Epimerase, Chain A, domain 1"/>
    <property type="match status" value="2"/>
</dbReference>
<dbReference type="HAMAP" id="MF_00197">
    <property type="entry name" value="DAP_epimerase"/>
    <property type="match status" value="1"/>
</dbReference>
<dbReference type="InterPro" id="IPR018510">
    <property type="entry name" value="DAP_epimerase_AS"/>
</dbReference>
<dbReference type="InterPro" id="IPR001653">
    <property type="entry name" value="DAP_epimerase_DapF"/>
</dbReference>
<dbReference type="NCBIfam" id="TIGR00652">
    <property type="entry name" value="DapF"/>
    <property type="match status" value="1"/>
</dbReference>
<dbReference type="PANTHER" id="PTHR31689:SF0">
    <property type="entry name" value="DIAMINOPIMELATE EPIMERASE"/>
    <property type="match status" value="1"/>
</dbReference>
<dbReference type="PANTHER" id="PTHR31689">
    <property type="entry name" value="DIAMINOPIMELATE EPIMERASE, CHLOROPLASTIC"/>
    <property type="match status" value="1"/>
</dbReference>
<dbReference type="Pfam" id="PF01678">
    <property type="entry name" value="DAP_epimerase"/>
    <property type="match status" value="2"/>
</dbReference>
<dbReference type="SUPFAM" id="SSF54506">
    <property type="entry name" value="Diaminopimelate epimerase-like"/>
    <property type="match status" value="1"/>
</dbReference>
<dbReference type="PROSITE" id="PS01326">
    <property type="entry name" value="DAP_EPIMERASE"/>
    <property type="match status" value="1"/>
</dbReference>
<accession>B5EZS3</accession>
<feature type="chain" id="PRO_1000099261" description="Diaminopimelate epimerase">
    <location>
        <begin position="1"/>
        <end position="274"/>
    </location>
</feature>
<feature type="active site" description="Proton donor" evidence="1">
    <location>
        <position position="73"/>
    </location>
</feature>
<feature type="active site" description="Proton acceptor" evidence="1">
    <location>
        <position position="217"/>
    </location>
</feature>
<feature type="binding site" evidence="1">
    <location>
        <position position="11"/>
    </location>
    <ligand>
        <name>substrate</name>
    </ligand>
</feature>
<feature type="binding site" evidence="1">
    <location>
        <position position="44"/>
    </location>
    <ligand>
        <name>substrate</name>
    </ligand>
</feature>
<feature type="binding site" evidence="1">
    <location>
        <position position="64"/>
    </location>
    <ligand>
        <name>substrate</name>
    </ligand>
</feature>
<feature type="binding site" evidence="1">
    <location>
        <begin position="74"/>
        <end position="75"/>
    </location>
    <ligand>
        <name>substrate</name>
    </ligand>
</feature>
<feature type="binding site" evidence="1">
    <location>
        <position position="157"/>
    </location>
    <ligand>
        <name>substrate</name>
    </ligand>
</feature>
<feature type="binding site" evidence="1">
    <location>
        <position position="190"/>
    </location>
    <ligand>
        <name>substrate</name>
    </ligand>
</feature>
<feature type="binding site" evidence="1">
    <location>
        <begin position="208"/>
        <end position="209"/>
    </location>
    <ligand>
        <name>substrate</name>
    </ligand>
</feature>
<feature type="binding site" evidence="1">
    <location>
        <begin position="218"/>
        <end position="219"/>
    </location>
    <ligand>
        <name>substrate</name>
    </ligand>
</feature>
<feature type="site" description="Could be important to modulate the pK values of the two catalytic cysteine residues" evidence="1">
    <location>
        <position position="159"/>
    </location>
</feature>
<feature type="site" description="Could be important to modulate the pK values of the two catalytic cysteine residues" evidence="1">
    <location>
        <position position="208"/>
    </location>
</feature>
<feature type="site" description="Important for dimerization" evidence="1">
    <location>
        <position position="268"/>
    </location>
</feature>
<name>DAPF_SALA4</name>
<evidence type="ECO:0000255" key="1">
    <source>
        <dbReference type="HAMAP-Rule" id="MF_00197"/>
    </source>
</evidence>
<organism>
    <name type="scientific">Salmonella agona (strain SL483)</name>
    <dbReference type="NCBI Taxonomy" id="454166"/>
    <lineage>
        <taxon>Bacteria</taxon>
        <taxon>Pseudomonadati</taxon>
        <taxon>Pseudomonadota</taxon>
        <taxon>Gammaproteobacteria</taxon>
        <taxon>Enterobacterales</taxon>
        <taxon>Enterobacteriaceae</taxon>
        <taxon>Salmonella</taxon>
    </lineage>
</organism>
<reference key="1">
    <citation type="journal article" date="2011" name="J. Bacteriol.">
        <title>Comparative genomics of 28 Salmonella enterica isolates: evidence for CRISPR-mediated adaptive sublineage evolution.</title>
        <authorList>
            <person name="Fricke W.F."/>
            <person name="Mammel M.K."/>
            <person name="McDermott P.F."/>
            <person name="Tartera C."/>
            <person name="White D.G."/>
            <person name="Leclerc J.E."/>
            <person name="Ravel J."/>
            <person name="Cebula T.A."/>
        </authorList>
    </citation>
    <scope>NUCLEOTIDE SEQUENCE [LARGE SCALE GENOMIC DNA]</scope>
    <source>
        <strain>SL483</strain>
    </source>
</reference>